<evidence type="ECO:0000250" key="1"/>
<evidence type="ECO:0000255" key="2">
    <source>
        <dbReference type="PROSITE-ProRule" id="PRU01246"/>
    </source>
</evidence>
<evidence type="ECO:0000305" key="3"/>
<protein>
    <recommendedName>
        <fullName>Putative integrase ORF241</fullName>
    </recommendedName>
</protein>
<feature type="chain" id="PRO_0000389032" description="Putative integrase ORF241">
    <location>
        <begin position="1"/>
        <end position="241"/>
    </location>
</feature>
<feature type="domain" description="Tyr recombinase" evidence="2">
    <location>
        <begin position="82"/>
        <end position="241"/>
    </location>
</feature>
<feature type="active site" evidence="2">
    <location>
        <position position="119"/>
    </location>
</feature>
<feature type="active site" evidence="2">
    <location>
        <position position="144"/>
    </location>
</feature>
<feature type="active site" evidence="2">
    <location>
        <position position="191"/>
    </location>
</feature>
<feature type="active site" evidence="2">
    <location>
        <position position="194"/>
    </location>
</feature>
<feature type="active site" evidence="2">
    <location>
        <position position="217"/>
    </location>
</feature>
<feature type="active site" description="O-(3'-phospho-DNA)-tyrosine intermediate" evidence="2">
    <location>
        <position position="226"/>
    </location>
</feature>
<dbReference type="EMBL" id="AJ888457">
    <property type="protein sequence ID" value="CAI59877.1"/>
    <property type="molecule type" value="Genomic_DNA"/>
</dbReference>
<dbReference type="RefSeq" id="YP_319903.1">
    <property type="nucleotide sequence ID" value="NC_007409.1"/>
</dbReference>
<dbReference type="GeneID" id="4484279"/>
<dbReference type="KEGG" id="vg:4484279"/>
<dbReference type="OrthoDB" id="9510at10239"/>
<dbReference type="Proteomes" id="UP000002150">
    <property type="component" value="Genome"/>
</dbReference>
<dbReference type="GO" id="GO:0003677">
    <property type="term" value="F:DNA binding"/>
    <property type="evidence" value="ECO:0007669"/>
    <property type="project" value="InterPro"/>
</dbReference>
<dbReference type="GO" id="GO:0015074">
    <property type="term" value="P:DNA integration"/>
    <property type="evidence" value="ECO:0007669"/>
    <property type="project" value="UniProtKB-KW"/>
</dbReference>
<dbReference type="GO" id="GO:0006310">
    <property type="term" value="P:DNA recombination"/>
    <property type="evidence" value="ECO:0007669"/>
    <property type="project" value="UniProtKB-KW"/>
</dbReference>
<dbReference type="GO" id="GO:0075713">
    <property type="term" value="P:establishment of integrated proviral latency"/>
    <property type="evidence" value="ECO:0007669"/>
    <property type="project" value="UniProtKB-KW"/>
</dbReference>
<dbReference type="GO" id="GO:0046718">
    <property type="term" value="P:symbiont entry into host cell"/>
    <property type="evidence" value="ECO:0007669"/>
    <property type="project" value="UniProtKB-KW"/>
</dbReference>
<dbReference type="GO" id="GO:0044826">
    <property type="term" value="P:viral genome integration into host DNA"/>
    <property type="evidence" value="ECO:0007669"/>
    <property type="project" value="UniProtKB-KW"/>
</dbReference>
<dbReference type="Gene3D" id="1.10.443.10">
    <property type="entry name" value="Intergrase catalytic core"/>
    <property type="match status" value="1"/>
</dbReference>
<dbReference type="InterPro" id="IPR011010">
    <property type="entry name" value="DNA_brk_join_enz"/>
</dbReference>
<dbReference type="InterPro" id="IPR013762">
    <property type="entry name" value="Integrase-like_cat_sf"/>
</dbReference>
<dbReference type="InterPro" id="IPR002104">
    <property type="entry name" value="Integrase_catalytic"/>
</dbReference>
<dbReference type="SUPFAM" id="SSF56349">
    <property type="entry name" value="DNA breaking-rejoining enzymes"/>
    <property type="match status" value="1"/>
</dbReference>
<dbReference type="PROSITE" id="PS51898">
    <property type="entry name" value="TYR_RECOMBINASE"/>
    <property type="match status" value="1"/>
</dbReference>
<comment type="function">
    <text evidence="1">This protein may encode an integrase, which is necessary for integration of the viral DNA into host genome.</text>
</comment>
<comment type="similarity">
    <text evidence="3">Belongs to the 'phage' integrase family.</text>
</comment>
<name>Y241_ATV</name>
<organismHost>
    <name type="scientific">Acidianus convivator</name>
    <dbReference type="NCBI Taxonomy" id="269667"/>
</organismHost>
<sequence length="241" mass="27790">MDKDELKEIIKNLPDNSPKILEYLKLAKEKGWKDIVNMIAQKLGLEEEEKKKTDETDVLKKILKPLGKGKIKGTWDYSVDFVEAKKTLVSAYKQLYDTNLMPYEAYVAILLIQLVNGCRIREAIRAFKTFIESGEREFQLQAQKHGNIRFMIIPDVVKKKATYNAVLTIDDEKLSARIRMFALHYLKANTHSLRYALISYLAKNGIDPAIIAKITGHKRLDRIITYTQTKDAIEMLRKLAD</sequence>
<organism>
    <name type="scientific">Acidianus two-tailed virus</name>
    <name type="common">ATV</name>
    <dbReference type="NCBI Taxonomy" id="315953"/>
    <lineage>
        <taxon>Viruses</taxon>
        <taxon>Viruses incertae sedis</taxon>
        <taxon>Bicaudaviridae</taxon>
        <taxon>Bicaudavirus</taxon>
    </lineage>
</organism>
<keyword id="KW-0229">DNA integration</keyword>
<keyword id="KW-0233">DNA recombination</keyword>
<keyword id="KW-1185">Reference proteome</keyword>
<keyword id="KW-1179">Viral genome integration</keyword>
<keyword id="KW-1160">Virus entry into host cell</keyword>
<reference key="1">
    <citation type="journal article" date="2005" name="Nature">
        <title>Virology: independent virus development outside a host.</title>
        <authorList>
            <person name="Haring M."/>
            <person name="Vestergaard G."/>
            <person name="Rachel R."/>
            <person name="Chen L."/>
            <person name="Garrett R.A."/>
            <person name="Prangishvili D."/>
        </authorList>
    </citation>
    <scope>NUCLEOTIDE SEQUENCE [GENOMIC DNA]</scope>
</reference>
<proteinExistence type="inferred from homology"/>
<accession>Q3V4T7</accession>